<organism>
    <name type="scientific">Mus musculus</name>
    <name type="common">Mouse</name>
    <dbReference type="NCBI Taxonomy" id="10090"/>
    <lineage>
        <taxon>Eukaryota</taxon>
        <taxon>Metazoa</taxon>
        <taxon>Chordata</taxon>
        <taxon>Craniata</taxon>
        <taxon>Vertebrata</taxon>
        <taxon>Euteleostomi</taxon>
        <taxon>Mammalia</taxon>
        <taxon>Eutheria</taxon>
        <taxon>Euarchontoglires</taxon>
        <taxon>Glires</taxon>
        <taxon>Rodentia</taxon>
        <taxon>Myomorpha</taxon>
        <taxon>Muroidea</taxon>
        <taxon>Muridae</taxon>
        <taxon>Murinae</taxon>
        <taxon>Mus</taxon>
        <taxon>Mus</taxon>
    </lineage>
</organism>
<protein>
    <recommendedName>
        <fullName evidence="31">Kelch-like ECH-associated protein 1</fullName>
    </recommendedName>
    <alternativeName>
        <fullName evidence="32">Cytosolic inhibitor of Nrf2</fullName>
        <shortName evidence="32">INrf2</shortName>
    </alternativeName>
</protein>
<proteinExistence type="evidence at protein level"/>
<keyword id="KW-0002">3D-structure</keyword>
<keyword id="KW-0963">Cytoplasm</keyword>
<keyword id="KW-0880">Kelch repeat</keyword>
<keyword id="KW-0539">Nucleus</keyword>
<keyword id="KW-1185">Reference proteome</keyword>
<keyword id="KW-0677">Repeat</keyword>
<keyword id="KW-0702">S-nitrosylation</keyword>
<keyword id="KW-0883">Thioether bond</keyword>
<keyword id="KW-0832">Ubl conjugation</keyword>
<keyword id="KW-0833">Ubl conjugation pathway</keyword>
<feature type="chain" id="PRO_0000119094" description="Kelch-like ECH-associated protein 1">
    <location>
        <begin position="1"/>
        <end position="624"/>
    </location>
</feature>
<feature type="domain" description="BTB" evidence="2">
    <location>
        <begin position="77"/>
        <end position="149"/>
    </location>
</feature>
<feature type="domain" description="BACK">
    <location>
        <begin position="184"/>
        <end position="286"/>
    </location>
</feature>
<feature type="repeat" description="Kelch 1">
    <location>
        <begin position="327"/>
        <end position="372"/>
    </location>
</feature>
<feature type="repeat" description="Kelch 2">
    <location>
        <begin position="373"/>
        <end position="423"/>
    </location>
</feature>
<feature type="repeat" description="Kelch 3">
    <location>
        <begin position="424"/>
        <end position="470"/>
    </location>
</feature>
<feature type="repeat" description="Kelch 4">
    <location>
        <begin position="471"/>
        <end position="517"/>
    </location>
</feature>
<feature type="repeat" description="Kelch 5">
    <location>
        <begin position="519"/>
        <end position="564"/>
    </location>
</feature>
<feature type="repeat" description="Kelch 6">
    <location>
        <begin position="565"/>
        <end position="611"/>
    </location>
</feature>
<feature type="site" description="Sensor for electrophilic agents" evidence="16 22 25">
    <location>
        <position position="151"/>
    </location>
</feature>
<feature type="site" description="Sensor for electrophilic agents" evidence="1">
    <location>
        <position position="257"/>
    </location>
</feature>
<feature type="site" description="Sensor for electrophilic agents" evidence="6 25">
    <location>
        <position position="273"/>
    </location>
</feature>
<feature type="site" description="Sensor for electrophilic agents" evidence="6 22 25">
    <location>
        <position position="288"/>
    </location>
</feature>
<feature type="site" description="Sensor for electrophilic agents" evidence="20">
    <location>
        <position position="434"/>
    </location>
</feature>
<feature type="modified residue" description="S-(2-succinyl)cysteine" evidence="22">
    <location>
        <position position="38"/>
    </location>
</feature>
<feature type="modified residue" description="S-(2,3-dicarboxypropyl)cysteine; alternate" evidence="1">
    <location>
        <position position="151"/>
    </location>
</feature>
<feature type="modified residue" description="S-(2-succinyl)cysteine; alternate" evidence="22">
    <location>
        <position position="151"/>
    </location>
</feature>
<feature type="modified residue" description="S-nitrosocysteine; alternate" evidence="21">
    <location>
        <position position="151"/>
    </location>
</feature>
<feature type="modified residue" description="S-(2-succinyl)cysteine" evidence="22">
    <location>
        <position position="241"/>
    </location>
</feature>
<feature type="modified residue" description="S-(2,3-dicarboxypropyl)cysteine" evidence="1">
    <location>
        <position position="257"/>
    </location>
</feature>
<feature type="modified residue" description="S-(2,3-dicarboxypropyl)cysteine" evidence="1">
    <location>
        <position position="273"/>
    </location>
</feature>
<feature type="modified residue" description="S-(2,3-dicarboxypropyl)cysteine; alternate" evidence="1">
    <location>
        <position position="288"/>
    </location>
</feature>
<feature type="modified residue" description="S-(2-succinyl)cysteine; alternate" evidence="22">
    <location>
        <position position="288"/>
    </location>
</feature>
<feature type="modified residue" description="S-(2-succinyl)cysteine" evidence="22">
    <location>
        <position position="319"/>
    </location>
</feature>
<feature type="modified residue" description="S-cGMP-cysteine" evidence="20">
    <location>
        <position position="434"/>
    </location>
</feature>
<feature type="modified residue" description="S-(2-succinyl)cysteine" evidence="22">
    <location>
        <position position="613"/>
    </location>
</feature>
<feature type="cross-link" description="N5-[4-(S-L-cysteinyl)-5-methyl-1H-imidazol-2-yl]-L-ornithine (Arg-Cys) (interchain with C-151 in KEAP1)" evidence="1">
    <location>
        <position position="135"/>
    </location>
</feature>
<feature type="cross-link" description="N5-[4-(S-L-cysteinyl)-5-methyl-1H-imidazol-2-yl]-L-ornithine (Cys-Arg) (interchain with R-135 in KEAP1)" evidence="1">
    <location>
        <position position="151"/>
    </location>
</feature>
<feature type="mutagenesis site" description="Abolished ability to ubiquitinate NFE2L2/NRF2 without affecting homodimerization." evidence="13">
    <original>R</original>
    <variation>G</variation>
    <location>
        <position position="71"/>
    </location>
</feature>
<feature type="mutagenesis site" description="Substitution with a small side chain that prevents covalent modification by an electrophile; promotes constitutive ubiquitination of NFE2L2/NRF2 and subsequent repression of phase 2 detoxifying enzymes. Knockin mice are healthy and viable in normal conditions but do not activate NFE2L2/NRF2 in response to oxidative stress." evidence="16 21">
    <original>C</original>
    <variation>S</variation>
    <location>
        <position position="151"/>
    </location>
</feature>
<feature type="mutagenesis site" description="Abolishes repression of NFE2L2/NRF2-dependent gene expression. Knockin mice die approximately three weeks after birth because of impaired ability of the BCR(KEAP1) complex to ubiquitinate NFE2L2/NRF2; when associated with A-288." evidence="6">
    <original>C</original>
    <variation>A</variation>
    <location>
        <position position="273"/>
    </location>
</feature>
<feature type="mutagenesis site" description="Retains ability to degrade NFE2L2/NRF2; when associated with E-288." evidence="25">
    <original>C</original>
    <variation>W</variation>
    <variation>M</variation>
    <location>
        <position position="273"/>
    </location>
</feature>
<feature type="mutagenesis site" description="Abolishes repression of NFE2L2/NRF2-dependent gene expression. Slows down degradation of NFE2L2/NRF2. Knockin mice die approximately three weeks after birth because of impaired ability of the BCR(KEAP1) complex to ubiquitinate NFE2L2/NRF2; when associated with A-273." evidence="6">
    <original>C</original>
    <variation>A</variation>
    <location>
        <position position="288"/>
    </location>
</feature>
<feature type="mutagenesis site" description="Retains ability to degrade NFE2L2/NRF2; when associated with W-273. Abolishes ability to be activated by 15-deoxy-delta(12,14)-prostaglandin J2." evidence="25">
    <original>C</original>
    <variation>E</variation>
    <variation>N</variation>
    <variation>R</variation>
    <location>
        <position position="288"/>
    </location>
</feature>
<feature type="mutagenesis site" description="Impaired interaction with SQSTM1/p62." evidence="17">
    <original>Y</original>
    <variation>A</variation>
    <location>
        <position position="334"/>
    </location>
</feature>
<feature type="mutagenesis site" description="Impaired interaction with SQSTM1/p62." evidence="17">
    <original>S</original>
    <variation>A</variation>
    <location>
        <position position="363"/>
    </location>
</feature>
<feature type="mutagenesis site" description="Impaired interaction with SQSTM1/p62. Abolished interaction with SQSTM1/p62; when associated with A-415 and A-483." evidence="17 18">
    <original>R</original>
    <variation>A</variation>
    <location>
        <position position="380"/>
    </location>
</feature>
<feature type="mutagenesis site" description="Impaired interaction with NFE2L2/NRF2." evidence="13">
    <original>R</original>
    <variation>M</variation>
    <location>
        <position position="380"/>
    </location>
</feature>
<feature type="mutagenesis site" description="Impaired interaction with SQSTM1/p62." evidence="17">
    <original>N</original>
    <variation>A</variation>
    <location>
        <position position="382"/>
    </location>
</feature>
<feature type="mutagenesis site" description="Impaired interaction with SQSTM1/p62. Abolished interaction with SQSTM1/p62; when associated with A-380 and A-483." evidence="17 18">
    <original>R</original>
    <variation>A</variation>
    <location>
        <position position="415"/>
    </location>
</feature>
<feature type="mutagenesis site" description="Impaired interaction with NFE2L2/NRF2." evidence="13">
    <original>R</original>
    <variation>M</variation>
    <location>
        <position position="415"/>
    </location>
</feature>
<feature type="mutagenesis site" description="Does not affect interaction with SQSTM1/p62. Abolished interaction with SQSTM1/p62; when associated with A-380 and A-415." evidence="17 18">
    <original>R</original>
    <variation>A</variation>
    <location>
        <position position="483"/>
    </location>
</feature>
<feature type="mutagenesis site" description="Impaired interaction with NFE2L2/NRF2." evidence="13">
    <original>R</original>
    <variation>M</variation>
    <location>
        <position position="483"/>
    </location>
</feature>
<feature type="mutagenesis site" description="Impaired interaction with SQSTM1/p62." evidence="17">
    <original>S</original>
    <variation>A</variation>
    <location>
        <position position="508"/>
    </location>
</feature>
<feature type="mutagenesis site" description="Impaired interaction with SQSTM1/p62." evidence="17">
    <original>Q</original>
    <variation>A</variation>
    <location>
        <position position="530"/>
    </location>
</feature>
<feature type="mutagenesis site" description="Impaired interaction with SQSTM1/p62." evidence="17">
    <original>S</original>
    <variation>A</variation>
    <location>
        <position position="555"/>
    </location>
</feature>
<feature type="mutagenesis site" description="Decreases repression of NFE2L2/NRF2-dependent gene expression." evidence="11">
    <original>SGR</original>
    <variation>AAA</variation>
    <location>
        <begin position="599"/>
        <end position="601"/>
    </location>
</feature>
<feature type="mutagenesis site" description="Abolishes repression of NFE2L2/NRF2-dependent gene expression." evidence="11">
    <original>SGV</original>
    <variation>AAA</variation>
    <location>
        <begin position="602"/>
        <end position="604"/>
    </location>
</feature>
<feature type="mutagenesis site" description="Impaired interaction with SQSTM1/p62." evidence="17">
    <original>S</original>
    <variation>A</variation>
    <location>
        <position position="602"/>
    </location>
</feature>
<feature type="mutagenesis site" description="Decreases repression of NFE2L2/NRF2-dependent gene expression." evidence="11">
    <original>GVAV</original>
    <variation>AAAA</variation>
    <location>
        <begin position="605"/>
        <end position="608"/>
    </location>
</feature>
<feature type="sequence conflict" description="In Ref. 4; BAE29559/BAE30980." evidence="33" ref="4">
    <original>T</original>
    <variation>A</variation>
    <location>
        <position position="43"/>
    </location>
</feature>
<feature type="sequence conflict" description="In Ref. 4; BAC32621." evidence="33" ref="4">
    <original>S</original>
    <variation>G</variation>
    <location>
        <position position="348"/>
    </location>
</feature>
<feature type="sequence conflict" description="In Ref. 4; BAE29559/BAE30980." evidence="33" ref="4">
    <original>P</original>
    <variation>T</variation>
    <location>
        <position position="361"/>
    </location>
</feature>
<feature type="sequence conflict" description="In Ref. 4; BAE32581/BAE33299." evidence="33" ref="4">
    <original>D</original>
    <variation>V</variation>
    <location>
        <position position="579"/>
    </location>
</feature>
<feature type="strand" evidence="40">
    <location>
        <begin position="326"/>
        <end position="331"/>
    </location>
</feature>
<feature type="strand" evidence="40">
    <location>
        <begin position="334"/>
        <end position="338"/>
    </location>
</feature>
<feature type="strand" evidence="40">
    <location>
        <begin position="342"/>
        <end position="345"/>
    </location>
</feature>
<feature type="turn" evidence="40">
    <location>
        <begin position="347"/>
        <end position="349"/>
    </location>
</feature>
<feature type="strand" evidence="40">
    <location>
        <begin position="352"/>
        <end position="354"/>
    </location>
</feature>
<feature type="strand" evidence="40">
    <location>
        <begin position="366"/>
        <end position="370"/>
    </location>
</feature>
<feature type="strand" evidence="40">
    <location>
        <begin position="373"/>
        <end position="377"/>
    </location>
</feature>
<feature type="strand" evidence="40">
    <location>
        <begin position="380"/>
        <end position="383"/>
    </location>
</feature>
<feature type="strand" evidence="40">
    <location>
        <begin position="386"/>
        <end position="389"/>
    </location>
</feature>
<feature type="strand" evidence="40">
    <location>
        <begin position="393"/>
        <end position="396"/>
    </location>
</feature>
<feature type="turn" evidence="40">
    <location>
        <begin position="398"/>
        <end position="400"/>
    </location>
</feature>
<feature type="strand" evidence="40">
    <location>
        <begin position="403"/>
        <end position="405"/>
    </location>
</feature>
<feature type="strand" evidence="40">
    <location>
        <begin position="417"/>
        <end position="421"/>
    </location>
</feature>
<feature type="strand" evidence="40">
    <location>
        <begin position="424"/>
        <end position="428"/>
    </location>
</feature>
<feature type="strand" evidence="40">
    <location>
        <begin position="440"/>
        <end position="444"/>
    </location>
</feature>
<feature type="turn" evidence="40">
    <location>
        <begin position="445"/>
        <end position="448"/>
    </location>
</feature>
<feature type="strand" evidence="40">
    <location>
        <begin position="449"/>
        <end position="452"/>
    </location>
</feature>
<feature type="strand" evidence="40">
    <location>
        <begin position="464"/>
        <end position="468"/>
    </location>
</feature>
<feature type="strand" evidence="40">
    <location>
        <begin position="471"/>
        <end position="475"/>
    </location>
</feature>
<feature type="strand" evidence="39">
    <location>
        <begin position="480"/>
        <end position="483"/>
    </location>
</feature>
<feature type="strand" evidence="40">
    <location>
        <begin position="487"/>
        <end position="491"/>
    </location>
</feature>
<feature type="helix" evidence="40">
    <location>
        <begin position="492"/>
        <end position="494"/>
    </location>
</feature>
<feature type="strand" evidence="40">
    <location>
        <begin position="496"/>
        <end position="500"/>
    </location>
</feature>
<feature type="strand" evidence="40">
    <location>
        <begin position="511"/>
        <end position="515"/>
    </location>
</feature>
<feature type="strand" evidence="40">
    <location>
        <begin position="518"/>
        <end position="522"/>
    </location>
</feature>
<feature type="strand" evidence="40">
    <location>
        <begin position="527"/>
        <end position="530"/>
    </location>
</feature>
<feature type="strand" evidence="40">
    <location>
        <begin position="534"/>
        <end position="538"/>
    </location>
</feature>
<feature type="turn" evidence="40">
    <location>
        <begin position="539"/>
        <end position="542"/>
    </location>
</feature>
<feature type="strand" evidence="40">
    <location>
        <begin position="543"/>
        <end position="546"/>
    </location>
</feature>
<feature type="strand" evidence="38">
    <location>
        <begin position="554"/>
        <end position="556"/>
    </location>
</feature>
<feature type="strand" evidence="40">
    <location>
        <begin position="558"/>
        <end position="562"/>
    </location>
</feature>
<feature type="strand" evidence="40">
    <location>
        <begin position="565"/>
        <end position="569"/>
    </location>
</feature>
<feature type="strand" evidence="37">
    <location>
        <begin position="574"/>
        <end position="577"/>
    </location>
</feature>
<feature type="strand" evidence="40">
    <location>
        <begin position="580"/>
        <end position="585"/>
    </location>
</feature>
<feature type="turn" evidence="40">
    <location>
        <begin position="586"/>
        <end position="589"/>
    </location>
</feature>
<feature type="strand" evidence="40">
    <location>
        <begin position="590"/>
        <end position="596"/>
    </location>
</feature>
<feature type="strand" evidence="40">
    <location>
        <begin position="605"/>
        <end position="610"/>
    </location>
</feature>
<sequence>MQPEPKLSGAPRSSQFLPLWSKCPEGAGDAVMYASTECKAEVTPSQDGNRTFSYTLEDHTKQAFGVMNELRLSQQLCDVTLQVKYEDIPAAQFMAHKVVLASSSPVFKAMFTNGLREQGMEVVSIEGIHPKVMERLIEFAYTASISVGEKCVLHVMNGAVMYQIDSVVRACSDFLVQQLDPSNAIGIANFAEQIGCTELHQRAREYIYMHFGEVAKQEEFFNLSHCQLATLISRDDLNVRCESEVFHACIDWVKYDCPQRRFYVQALLRAVRCHALTPRFLQTQLQKCEILQADARCKDYLVQIFQELTLHKPTQAVPCRAPKVGRLIYTAGGYFRQSLSYLEAYNPSNGSWLRLADLQVPRSGLAGCVVGGLLYAVGGRNNSPDGNTDSSALDCYNPMTNQWSPCASMSVPRNRIGVGVIDGHIYAVGGSHGCIHHSSVERYEPERDEWHLVAPMLTRRIGVGVAVLNRLLYAVGGFDGTNRLNSAECYYPERNEWRMITPMNTIRSGAGVCVLHNCIYAAGGYDGQDQLNSVERYDVETETWTFVAPMRHHRSALGITVHQGKIYVLGGYDGHTFLDSVECYDPDSDTWSEVTRMTSGRSGVGVAVTMEPCRKQIDQQNCTC</sequence>
<accession>Q9Z2X8</accession>
<accession>Q3U243</accession>
<accession>Q3U8N7</accession>
<accession>Q547S3</accession>
<accession>Q6ZQI6</accession>
<accession>Q8BQY3</accession>
<gene>
    <name evidence="31 34" type="primary">Keap1</name>
    <name evidence="32" type="synonym">Inrf2</name>
    <name evidence="30" type="synonym">Kiaa0132</name>
</gene>
<evidence type="ECO:0000250" key="1">
    <source>
        <dbReference type="UniProtKB" id="Q14145"/>
    </source>
</evidence>
<evidence type="ECO:0000255" key="2">
    <source>
        <dbReference type="PROSITE-ProRule" id="PRU00037"/>
    </source>
</evidence>
<evidence type="ECO:0000269" key="3">
    <source>
    </source>
</evidence>
<evidence type="ECO:0000269" key="4">
    <source>
    </source>
</evidence>
<evidence type="ECO:0000269" key="5">
    <source>
    </source>
</evidence>
<evidence type="ECO:0000269" key="6">
    <source>
    </source>
</evidence>
<evidence type="ECO:0000269" key="7">
    <source>
    </source>
</evidence>
<evidence type="ECO:0000269" key="8">
    <source>
    </source>
</evidence>
<evidence type="ECO:0000269" key="9">
    <source>
    </source>
</evidence>
<evidence type="ECO:0000269" key="10">
    <source>
    </source>
</evidence>
<evidence type="ECO:0000269" key="11">
    <source>
    </source>
</evidence>
<evidence type="ECO:0000269" key="12">
    <source>
    </source>
</evidence>
<evidence type="ECO:0000269" key="13">
    <source>
    </source>
</evidence>
<evidence type="ECO:0000269" key="14">
    <source>
    </source>
</evidence>
<evidence type="ECO:0000269" key="15">
    <source>
    </source>
</evidence>
<evidence type="ECO:0000269" key="16">
    <source>
    </source>
</evidence>
<evidence type="ECO:0000269" key="17">
    <source>
    </source>
</evidence>
<evidence type="ECO:0000269" key="18">
    <source>
    </source>
</evidence>
<evidence type="ECO:0000269" key="19">
    <source>
    </source>
</evidence>
<evidence type="ECO:0000269" key="20">
    <source>
    </source>
</evidence>
<evidence type="ECO:0000269" key="21">
    <source>
    </source>
</evidence>
<evidence type="ECO:0000269" key="22">
    <source>
    </source>
</evidence>
<evidence type="ECO:0000269" key="23">
    <source>
    </source>
</evidence>
<evidence type="ECO:0000269" key="24">
    <source>
    </source>
</evidence>
<evidence type="ECO:0000269" key="25">
    <source>
    </source>
</evidence>
<evidence type="ECO:0000269" key="26">
    <source>
    </source>
</evidence>
<evidence type="ECO:0000269" key="27">
    <source>
    </source>
</evidence>
<evidence type="ECO:0000269" key="28">
    <source>
    </source>
</evidence>
<evidence type="ECO:0000269" key="29">
    <source>
    </source>
</evidence>
<evidence type="ECO:0000303" key="30">
    <source>
    </source>
</evidence>
<evidence type="ECO:0000303" key="31">
    <source>
    </source>
</evidence>
<evidence type="ECO:0000303" key="32">
    <source ref="2"/>
</evidence>
<evidence type="ECO:0000305" key="33"/>
<evidence type="ECO:0000312" key="34">
    <source>
        <dbReference type="MGI" id="MGI:1858732"/>
    </source>
</evidence>
<evidence type="ECO:0007744" key="35">
    <source>
        <dbReference type="PDB" id="3ADE"/>
    </source>
</evidence>
<evidence type="ECO:0007744" key="36">
    <source>
        <dbReference type="PDB" id="3WDZ"/>
    </source>
</evidence>
<evidence type="ECO:0007829" key="37">
    <source>
        <dbReference type="PDB" id="4ZY3"/>
    </source>
</evidence>
<evidence type="ECO:0007829" key="38">
    <source>
        <dbReference type="PDB" id="6ZEZ"/>
    </source>
</evidence>
<evidence type="ECO:0007829" key="39">
    <source>
        <dbReference type="PDB" id="7C60"/>
    </source>
</evidence>
<evidence type="ECO:0007829" key="40">
    <source>
        <dbReference type="PDB" id="7OFE"/>
    </source>
</evidence>
<comment type="function">
    <text evidence="1 3 4 6 7 8 10 17 18 20 22 24 27 28 29">Substrate-specific adapter of a BCR (BTB-CUL3-RBX1) E3 ubiquitin ligase complex that regulates the response to oxidative stress by targeting NFE2L2/NRF2 for ubiquitination (PubMed:12682069, PubMed:15282312, PubMed:15367669, PubMed:15581590, PubMed:9887101). KEAP1 acts as a key sensor of oxidative and electrophilic stress: in normal conditions, the BCR(KEAP1) complex mediates ubiquitination and degradation of NFE2L2/NRF2, a transcription factor regulating expression of many cytoprotective genes (PubMed:12193649, PubMed:14764894, PubMed:9887101). In response to oxidative stress, different electrophile metabolites trigger non-enzymatic covalent modifications of highly reactive cysteine residues in KEAP1, leading to inactivate the ubiquitin ligase activity of the BCR(KEAP1) complex, promoting NFE2L2/NRF2 nuclear accumulation and expression of phase II detoxifying enzymes (PubMed:12193649, PubMed:20498371, PubMed:22014577, PubMed:29590092). In response to selective autophagy, KEAP1 is sequestered in inclusion bodies following its interaction with SQSTM1/p62, leading to inactivation of the BCR(KEAP1) complex and activation of NFE2L2/NRF2 (PubMed:20173742, PubMed:20421418, PubMed:24011591). The BCR(KEAP1) complex also mediates ubiquitination of SQSTM1/p62, increasing SQSTM1/p62 sequestering activity and degradation (PubMed:28380357). The BCR(KEAP1) complex also targets BPTF and PGAM5 for ubiquitination and degradation by the proteasome (By similarity).</text>
</comment>
<comment type="activity regulation">
    <text evidence="3 6 17 18 20 22 24">Ubiquitin ligase activity of the BCR(KEAP1) complex is inhibited by oxidative stress and electrophile metabolites such as sulforaphane (PubMed:12193649, PubMed:14764894, PubMed:22014577). Electrophile metabolites react with reactive cysteine residues in KEAP1 and trigger non-enzymatic covalent modifications of these cysteine residues, leading to inactivate the ubiquitin ligase activity of the BCR(KEAP1) complex (PubMed:20498371, PubMed:22014577). Selective autophagy also inactivates the BCR(KEAP1) complex via interaction between KEAP1 and SQSTM1/p62, which sequesters the complex in inclusion bodies and promotes its degradation (PubMed:20173742, PubMed:20421418, PubMed:24011591).</text>
</comment>
<comment type="pathway">
    <text evidence="4 7 8 10 29">Protein modification; protein ubiquitination.</text>
</comment>
<comment type="subunit">
    <text evidence="1 7 8 10 11 12 13 17 18 19 24 26">Component of the BCR(KEAP1) E3 ubiquitin ligase complex, at least composed of 2 molecules of CUL3, 2 molecules of KEAP1, and RBX1 (PubMed:15282312, PubMed:16790436, PubMed:27697860). Interacts with NFE2L2/NRF2; the interaction is direct (PubMed:15282312, PubMed:15367669, PubMed:15581590, PubMed:16507366, PubMed:16581765, PubMed:16790436, PubMed:27697860). Forms a ternary complex with NFE2L2/NRF2 and PGAM5 (By similarity). Interacts with (phosphorylated) SQSTM1/p62; the interaction is direct and inactivates the BCR(KEAP1) complex by sequestering it in inclusion bodies, promoting its degradation (PubMed:20173742, PubMed:20421418, PubMed:20495340, PubMed:24011591). Interacts with NFE2L1 (By similarity). Interacts with BPTF and PTMA (By similarity). Interacts with MAP1LC3B (By similarity). Interacts indirectly with ENC1 (By similarity). Interacts with SESN1 and SESN2 (By similarity). Interacts with HSP90AA1 and HSP90AB1 (By similarity). Interacts with PGCKA1; this interaction prevents the ubiquitination of KEAP1 by TRIM25, thus protecting KEAP1 from degradation (By similarity).</text>
</comment>
<comment type="interaction">
    <interactant intactId="EBI-647110">
        <id>Q9Z2X8</id>
    </interactant>
    <interactant intactId="EBI-647110">
        <id>Q9Z2X8</id>
        <label>Keap1</label>
    </interactant>
    <organismsDiffer>false</organismsDiffer>
    <experiments>3</experiments>
</comment>
<comment type="interaction">
    <interactant intactId="EBI-647110">
        <id>Q9Z2X8</id>
    </interactant>
    <interactant intactId="EBI-642563">
        <id>Q60795</id>
        <label>Nfe2l2</label>
    </interactant>
    <organismsDiffer>false</organismsDiffer>
    <experiments>25</experiments>
</comment>
<comment type="interaction">
    <interactant intactId="EBI-647110">
        <id>Q9Z2X8</id>
    </interactant>
    <interactant intactId="EBI-645025">
        <id>Q64337</id>
        <label>Sqstm1</label>
    </interactant>
    <organismsDiffer>false</organismsDiffer>
    <experiments>6</experiments>
</comment>
<comment type="interaction">
    <interactant intactId="EBI-647110">
        <id>Q9Z2X8</id>
    </interactant>
    <interactant intactId="EBI-307104">
        <id>Q13501</id>
        <label>SQSTM1</label>
    </interactant>
    <organismsDiffer>true</organismsDiffer>
    <experiments>2</experiments>
</comment>
<comment type="subcellular location">
    <subcellularLocation>
        <location evidence="8 9 14 26">Cytoplasm</location>
    </subcellularLocation>
    <subcellularLocation>
        <location evidence="9">Nucleus</location>
    </subcellularLocation>
    <text evidence="14 17 18 19">Mainly cytoplasmic (PubMed:17903176). In response to selective autophagy, relocalizes to inclusion bodies following interaction with SQSTM1/p62 (PubMed:20173742, PubMed:20421418, PubMed:20495340).</text>
</comment>
<comment type="domain">
    <text evidence="1">The Kelch repeats mediate interaction with NFE2L2/NRF2, BPTF and PGAM5.</text>
</comment>
<comment type="domain">
    <text evidence="3 6 20 22 25">KEAP1 contains reactive cysteine residues that act as sensors for endogenously produced and exogenously encountered small molecules, which react with sulfhydryl groups and modify the cysteine sensors, leading to impair ability of the BCR(KEAP1) complex to ubiquitinate target proteins.</text>
</comment>
<comment type="PTM">
    <text evidence="1 3 15 20 22 28">Non-enzymatic covalent modifications of reactive cysteines by electrophile metabolites inactivate the BCR(KEAP1) complex (PubMed:12193649, PubMed:20498371, PubMed:22014577). Accumulation of fumarate promotes the formation of cysteine S-succination (S-(2-succinyl)cysteine), leading to inactivate the BCR(KEAP1) complex and promote NFE2L2/NRF2 nuclear accumulation and activation (PubMed:22014577). Nitric oxide-dependent 8-Nitro-cGMP formation promotes cysteine guanylation (S-cGMP-cysteine), leading to NFE2L2/NRF2 nuclear accumulation and activation (PubMed:17906641, PubMed:20498371). Itaconate, an anti-inflammatory metabolite generated in response to lipopolysaccharide, alkylates cysteines, activating NFE2L2/NRF2 (PubMed:29590092). Methylglyoxal, a reactive metabolite that accumulates when the glycolytic enzyme PGK1 is inhibited, promotes formation of a methylimidazole cross-link between proximal Cys-151 and Arg-135 on another KEAP1 molecule, resulting in an inactive dimer that inactivates the BCR(KEAP1) complex (By similarity).</text>
</comment>
<comment type="PTM">
    <text evidence="23 24">Degraded via a proteasomal-independent process during selective autophagy: interaction with phosphorylated SQSTM1/p62 sequesters KEAP1 in inclusion bodies, leading to its degradation.</text>
</comment>
<comment type="PTM">
    <text evidence="1">Auto-ubiquitinated by the BCR(KEAP1) complex. Quinone-induced oxidative stress, but not sulforaphane, increases its ubiquitination. Ubiquitination and subsequent degradation is most pronounced following prolonged exposure of cells to oxidative stress, particularly in glutathione-deficient cells that are highly susceptible to oxidative stress. Deubiquitinated by USP25; leading to stabilization. Ubiquitinated by TRIM25; leading to degradation upon ER stress (By similarity).</text>
</comment>
<comment type="disruption phenotype">
    <text evidence="5">Early postnatal lethality caused by abnormal cornification (PubMed:14517554). Mice survive until weaning and probably die from malnutrition resulting from hyperkeratosis in the esophagus and forestomach that cause gastric obstruction (PubMed:14517554). Defects are caused by constitutive activation Nfe2l2/Nrf2, leading to constitutive expression of phase 2 detoxifying enzymes (PubMed:14517554). Mice lacking both Nfe2l2/Nrf2 and Keap1 reverse the hyperkeratosis phenotype and are healthy and viable in normal conditions (PubMed:14517554).</text>
</comment>
<comment type="similarity">
    <text evidence="33">Belongs to the KEAP1 family.</text>
</comment>
<comment type="caution">
    <text evidence="19 23 24">According to a report, not degraded in response to autophagy (PubMed:20495340). However, publications have shown that KEAP1 is degraded via a proteasomal-independent process during selective autophagy (PubMed:22872865, PubMed:24011591).</text>
</comment>
<comment type="caution">
    <text evidence="1 3">The mechanism of inactivation of the BCR(KEAP1) complex by covalent modifications of reactive cysteines is unclear. Covalent modifications were initially thought to disrupt interaction between KEAP1 and NFE2L2/NRF2 (PubMed:12193649). Recent publications suggest that cysteine modifications disrupt the interaction between KEAP1 and CUL3 without affecting the interaction between KEAP1 and NFE2L2/NRF2 (By similarity).</text>
</comment>
<comment type="sequence caution" evidence="33">
    <conflict type="erroneous initiation">
        <sequence resource="EMBL-CDS" id="BAC97871"/>
    </conflict>
</comment>
<name>KEAP1_MOUSE</name>
<dbReference type="EMBL" id="AB020063">
    <property type="protein sequence ID" value="BAA34639.1"/>
    <property type="molecule type" value="mRNA"/>
</dbReference>
<dbReference type="EMBL" id="AF454353">
    <property type="protein sequence ID" value="AAL84711.1"/>
    <property type="molecule type" value="Genomic_DNA"/>
</dbReference>
<dbReference type="EMBL" id="AK129061">
    <property type="protein sequence ID" value="BAC97871.1"/>
    <property type="status" value="ALT_INIT"/>
    <property type="molecule type" value="mRNA"/>
</dbReference>
<dbReference type="EMBL" id="AK046178">
    <property type="protein sequence ID" value="BAC32621.1"/>
    <property type="molecule type" value="mRNA"/>
</dbReference>
<dbReference type="EMBL" id="AK076234">
    <property type="protein sequence ID" value="BAC36267.1"/>
    <property type="molecule type" value="mRNA"/>
</dbReference>
<dbReference type="EMBL" id="AK150437">
    <property type="protein sequence ID" value="BAE29559.1"/>
    <property type="molecule type" value="mRNA"/>
</dbReference>
<dbReference type="EMBL" id="AK150485">
    <property type="protein sequence ID" value="BAE29601.1"/>
    <property type="molecule type" value="mRNA"/>
</dbReference>
<dbReference type="EMBL" id="AK152142">
    <property type="protein sequence ID" value="BAE30980.1"/>
    <property type="molecule type" value="mRNA"/>
</dbReference>
<dbReference type="EMBL" id="AK154430">
    <property type="protein sequence ID" value="BAE32581.1"/>
    <property type="molecule type" value="mRNA"/>
</dbReference>
<dbReference type="EMBL" id="AK155507">
    <property type="protein sequence ID" value="BAE33299.1"/>
    <property type="molecule type" value="mRNA"/>
</dbReference>
<dbReference type="EMBL" id="AK159858">
    <property type="protein sequence ID" value="BAE35433.1"/>
    <property type="molecule type" value="mRNA"/>
</dbReference>
<dbReference type="EMBL" id="BC055732">
    <property type="protein sequence ID" value="AAH55732.1"/>
    <property type="molecule type" value="mRNA"/>
</dbReference>
<dbReference type="CCDS" id="CCDS22897.1"/>
<dbReference type="RefSeq" id="NP_001103775.1">
    <property type="nucleotide sequence ID" value="NM_001110305.1"/>
</dbReference>
<dbReference type="RefSeq" id="NP_001103776.1">
    <property type="nucleotide sequence ID" value="NM_001110306.1"/>
</dbReference>
<dbReference type="RefSeq" id="NP_001103777.1">
    <property type="nucleotide sequence ID" value="NM_001110307.1"/>
</dbReference>
<dbReference type="RefSeq" id="NP_057888.1">
    <property type="nucleotide sequence ID" value="NM_016679.4"/>
</dbReference>
<dbReference type="PDB" id="1X2J">
    <property type="method" value="X-ray"/>
    <property type="resolution" value="1.60 A"/>
    <property type="chains" value="A=309-624"/>
</dbReference>
<dbReference type="PDB" id="1X2R">
    <property type="method" value="X-ray"/>
    <property type="resolution" value="1.70 A"/>
    <property type="chains" value="A=309-624"/>
</dbReference>
<dbReference type="PDB" id="2DYH">
    <property type="method" value="X-ray"/>
    <property type="resolution" value="1.90 A"/>
    <property type="chains" value="A=309-624"/>
</dbReference>
<dbReference type="PDB" id="2Z32">
    <property type="method" value="X-ray"/>
    <property type="resolution" value="2.00 A"/>
    <property type="chains" value="A=309-624"/>
</dbReference>
<dbReference type="PDB" id="3ADE">
    <property type="method" value="X-ray"/>
    <property type="resolution" value="2.80 A"/>
    <property type="chains" value="A=309-624"/>
</dbReference>
<dbReference type="PDB" id="3WDZ">
    <property type="method" value="X-ray"/>
    <property type="resolution" value="2.60 A"/>
    <property type="chains" value="A=321-609"/>
</dbReference>
<dbReference type="PDB" id="3WN7">
    <property type="method" value="X-ray"/>
    <property type="resolution" value="1.57 A"/>
    <property type="chains" value="A/L=321-609"/>
</dbReference>
<dbReference type="PDB" id="4ZY3">
    <property type="method" value="X-ray"/>
    <property type="resolution" value="1.80 A"/>
    <property type="chains" value="A/B=321-609"/>
</dbReference>
<dbReference type="PDB" id="5CGJ">
    <property type="method" value="X-ray"/>
    <property type="resolution" value="3.36 A"/>
    <property type="chains" value="A=309-624"/>
</dbReference>
<dbReference type="PDB" id="5FNQ">
    <property type="method" value="X-ray"/>
    <property type="resolution" value="1.91 A"/>
    <property type="chains" value="A=322-624"/>
</dbReference>
<dbReference type="PDB" id="5FNR">
    <property type="method" value="X-ray"/>
    <property type="resolution" value="1.89 A"/>
    <property type="chains" value="A=322-624"/>
</dbReference>
<dbReference type="PDB" id="5FNS">
    <property type="method" value="X-ray"/>
    <property type="resolution" value="1.79 A"/>
    <property type="chains" value="A=322-624"/>
</dbReference>
<dbReference type="PDB" id="5FNT">
    <property type="method" value="X-ray"/>
    <property type="resolution" value="1.79 A"/>
    <property type="chains" value="A=322-624"/>
</dbReference>
<dbReference type="PDB" id="5FNU">
    <property type="method" value="X-ray"/>
    <property type="resolution" value="1.78 A"/>
    <property type="chains" value="A=322-624"/>
</dbReference>
<dbReference type="PDB" id="5FZJ">
    <property type="method" value="X-ray"/>
    <property type="resolution" value="2.01 A"/>
    <property type="chains" value="A=322-624"/>
</dbReference>
<dbReference type="PDB" id="5FZN">
    <property type="method" value="X-ray"/>
    <property type="resolution" value="1.97 A"/>
    <property type="chains" value="A=322-624"/>
</dbReference>
<dbReference type="PDB" id="6QMC">
    <property type="method" value="X-ray"/>
    <property type="resolution" value="1.77 A"/>
    <property type="chains" value="A=322-624"/>
</dbReference>
<dbReference type="PDB" id="6QMD">
    <property type="method" value="X-ray"/>
    <property type="resolution" value="1.94 A"/>
    <property type="chains" value="A=322-624"/>
</dbReference>
<dbReference type="PDB" id="6QME">
    <property type="method" value="X-ray"/>
    <property type="resolution" value="1.81 A"/>
    <property type="chains" value="A=322-624"/>
</dbReference>
<dbReference type="PDB" id="6QMJ">
    <property type="method" value="X-ray"/>
    <property type="resolution" value="1.86 A"/>
    <property type="chains" value="A=322-624"/>
</dbReference>
<dbReference type="PDB" id="6QMK">
    <property type="method" value="X-ray"/>
    <property type="resolution" value="1.72 A"/>
    <property type="chains" value="A=322-624"/>
</dbReference>
<dbReference type="PDB" id="6ZEW">
    <property type="method" value="X-ray"/>
    <property type="resolution" value="1.38 A"/>
    <property type="chains" value="A=322-624"/>
</dbReference>
<dbReference type="PDB" id="6ZEX">
    <property type="method" value="X-ray"/>
    <property type="resolution" value="1.98 A"/>
    <property type="chains" value="A=322-624"/>
</dbReference>
<dbReference type="PDB" id="6ZEY">
    <property type="method" value="X-ray"/>
    <property type="resolution" value="1.80 A"/>
    <property type="chains" value="A=322-624"/>
</dbReference>
<dbReference type="PDB" id="6ZEZ">
    <property type="method" value="X-ray"/>
    <property type="resolution" value="2.55 A"/>
    <property type="chains" value="A=322-624"/>
</dbReference>
<dbReference type="PDB" id="6ZF0">
    <property type="method" value="X-ray"/>
    <property type="resolution" value="1.60 A"/>
    <property type="chains" value="A=322-624"/>
</dbReference>
<dbReference type="PDB" id="6ZF1">
    <property type="method" value="X-ray"/>
    <property type="resolution" value="1.74 A"/>
    <property type="chains" value="A=322-624"/>
</dbReference>
<dbReference type="PDB" id="6ZF2">
    <property type="method" value="X-ray"/>
    <property type="resolution" value="2.20 A"/>
    <property type="chains" value="A=322-624"/>
</dbReference>
<dbReference type="PDB" id="6ZF3">
    <property type="method" value="X-ray"/>
    <property type="resolution" value="1.28 A"/>
    <property type="chains" value="A=322-624"/>
</dbReference>
<dbReference type="PDB" id="6ZF4">
    <property type="method" value="X-ray"/>
    <property type="resolution" value="1.21 A"/>
    <property type="chains" value="A=322-624"/>
</dbReference>
<dbReference type="PDB" id="6ZF5">
    <property type="method" value="X-ray"/>
    <property type="resolution" value="1.29 A"/>
    <property type="chains" value="A=322-624"/>
</dbReference>
<dbReference type="PDB" id="6ZF6">
    <property type="method" value="X-ray"/>
    <property type="resolution" value="1.38 A"/>
    <property type="chains" value="A=322-624"/>
</dbReference>
<dbReference type="PDB" id="6ZF7">
    <property type="method" value="X-ray"/>
    <property type="resolution" value="1.37 A"/>
    <property type="chains" value="A=322-624"/>
</dbReference>
<dbReference type="PDB" id="6ZF8">
    <property type="method" value="X-ray"/>
    <property type="resolution" value="1.75 A"/>
    <property type="chains" value="A=322-624"/>
</dbReference>
<dbReference type="PDB" id="7C5E">
    <property type="method" value="X-ray"/>
    <property type="resolution" value="1.75 A"/>
    <property type="chains" value="A=324-616"/>
</dbReference>
<dbReference type="PDB" id="7C60">
    <property type="method" value="X-ray"/>
    <property type="resolution" value="1.95 A"/>
    <property type="chains" value="A=324-616"/>
</dbReference>
<dbReference type="PDB" id="7ECA">
    <property type="method" value="X-ray"/>
    <property type="resolution" value="2.00 A"/>
    <property type="chains" value="A=309-624"/>
</dbReference>
<dbReference type="PDB" id="7OF8">
    <property type="method" value="X-ray"/>
    <property type="resolution" value="1.78 A"/>
    <property type="chains" value="A=322-624"/>
</dbReference>
<dbReference type="PDB" id="7OF9">
    <property type="method" value="X-ray"/>
    <property type="resolution" value="1.80 A"/>
    <property type="chains" value="A=322-624"/>
</dbReference>
<dbReference type="PDB" id="7OFA">
    <property type="method" value="X-ray"/>
    <property type="resolution" value="2.22 A"/>
    <property type="chains" value="A=322-624"/>
</dbReference>
<dbReference type="PDB" id="7OFB">
    <property type="method" value="X-ray"/>
    <property type="resolution" value="2.40 A"/>
    <property type="chains" value="A=322-624"/>
</dbReference>
<dbReference type="PDB" id="7OFC">
    <property type="method" value="X-ray"/>
    <property type="resolution" value="1.97 A"/>
    <property type="chains" value="A=322-624"/>
</dbReference>
<dbReference type="PDB" id="7OFD">
    <property type="method" value="X-ray"/>
    <property type="resolution" value="1.25 A"/>
    <property type="chains" value="A=322-624"/>
</dbReference>
<dbReference type="PDB" id="7OFE">
    <property type="method" value="X-ray"/>
    <property type="resolution" value="1.19 A"/>
    <property type="chains" value="A=323-613"/>
</dbReference>
<dbReference type="PDB" id="7OFF">
    <property type="method" value="X-ray"/>
    <property type="resolution" value="1.37 A"/>
    <property type="chains" value="A=322-624"/>
</dbReference>
<dbReference type="PDB" id="7P58">
    <property type="method" value="X-ray"/>
    <property type="resolution" value="1.89 A"/>
    <property type="chains" value="A=322-624"/>
</dbReference>
<dbReference type="PDB" id="7P5E">
    <property type="method" value="X-ray"/>
    <property type="resolution" value="1.87 A"/>
    <property type="chains" value="A=322-624"/>
</dbReference>
<dbReference type="PDB" id="7P5F">
    <property type="method" value="X-ray"/>
    <property type="resolution" value="1.88 A"/>
    <property type="chains" value="A=322-624"/>
</dbReference>
<dbReference type="PDB" id="7P5I">
    <property type="method" value="X-ray"/>
    <property type="resolution" value="1.86 A"/>
    <property type="chains" value="A=322-624"/>
</dbReference>
<dbReference type="PDB" id="7P5K">
    <property type="method" value="X-ray"/>
    <property type="resolution" value="1.79 A"/>
    <property type="chains" value="A=322-624"/>
</dbReference>
<dbReference type="PDB" id="7P5N">
    <property type="method" value="X-ray"/>
    <property type="resolution" value="1.89 A"/>
    <property type="chains" value="A=322-624"/>
</dbReference>
<dbReference type="PDB" id="7P5P">
    <property type="method" value="X-ray"/>
    <property type="resolution" value="1.85 A"/>
    <property type="chains" value="A=322-624"/>
</dbReference>
<dbReference type="PDB" id="7YEN">
    <property type="method" value="X-ray"/>
    <property type="resolution" value="2.80 A"/>
    <property type="chains" value="A=322-615"/>
</dbReference>
<dbReference type="PDB" id="8A46">
    <property type="method" value="X-ray"/>
    <property type="resolution" value="1.32 A"/>
    <property type="chains" value="A=322-624"/>
</dbReference>
<dbReference type="PDB" id="8IN0">
    <property type="method" value="X-ray"/>
    <property type="resolution" value="1.80 A"/>
    <property type="chains" value="A=309-624"/>
</dbReference>
<dbReference type="PDB" id="8Q1Q">
    <property type="method" value="X-ray"/>
    <property type="resolution" value="1.38 A"/>
    <property type="chains" value="A=322-624"/>
</dbReference>
<dbReference type="PDB" id="8Q1R">
    <property type="method" value="X-ray"/>
    <property type="resolution" value="1.33 A"/>
    <property type="chains" value="A=322-624"/>
</dbReference>
<dbReference type="PDB" id="9F2P">
    <property type="method" value="X-ray"/>
    <property type="resolution" value="1.36 A"/>
    <property type="chains" value="A=322-624"/>
</dbReference>
<dbReference type="PDB" id="9F2Q">
    <property type="method" value="X-ray"/>
    <property type="resolution" value="1.20 A"/>
    <property type="chains" value="A=322-624"/>
</dbReference>
<dbReference type="PDBsum" id="1X2J"/>
<dbReference type="PDBsum" id="1X2R"/>
<dbReference type="PDBsum" id="2DYH"/>
<dbReference type="PDBsum" id="2Z32"/>
<dbReference type="PDBsum" id="3ADE"/>
<dbReference type="PDBsum" id="3WDZ"/>
<dbReference type="PDBsum" id="3WN7"/>
<dbReference type="PDBsum" id="4ZY3"/>
<dbReference type="PDBsum" id="5CGJ"/>
<dbReference type="PDBsum" id="5FNQ"/>
<dbReference type="PDBsum" id="5FNR"/>
<dbReference type="PDBsum" id="5FNS"/>
<dbReference type="PDBsum" id="5FNT"/>
<dbReference type="PDBsum" id="5FNU"/>
<dbReference type="PDBsum" id="5FZJ"/>
<dbReference type="PDBsum" id="5FZN"/>
<dbReference type="PDBsum" id="6QMC"/>
<dbReference type="PDBsum" id="6QMD"/>
<dbReference type="PDBsum" id="6QME"/>
<dbReference type="PDBsum" id="6QMJ"/>
<dbReference type="PDBsum" id="6QMK"/>
<dbReference type="PDBsum" id="6ZEW"/>
<dbReference type="PDBsum" id="6ZEX"/>
<dbReference type="PDBsum" id="6ZEY"/>
<dbReference type="PDBsum" id="6ZEZ"/>
<dbReference type="PDBsum" id="6ZF0"/>
<dbReference type="PDBsum" id="6ZF1"/>
<dbReference type="PDBsum" id="6ZF2"/>
<dbReference type="PDBsum" id="6ZF3"/>
<dbReference type="PDBsum" id="6ZF4"/>
<dbReference type="PDBsum" id="6ZF5"/>
<dbReference type="PDBsum" id="6ZF6"/>
<dbReference type="PDBsum" id="6ZF7"/>
<dbReference type="PDBsum" id="6ZF8"/>
<dbReference type="PDBsum" id="7C5E"/>
<dbReference type="PDBsum" id="7C60"/>
<dbReference type="PDBsum" id="7ECA"/>
<dbReference type="PDBsum" id="7OF8"/>
<dbReference type="PDBsum" id="7OF9"/>
<dbReference type="PDBsum" id="7OFA"/>
<dbReference type="PDBsum" id="7OFB"/>
<dbReference type="PDBsum" id="7OFC"/>
<dbReference type="PDBsum" id="7OFD"/>
<dbReference type="PDBsum" id="7OFE"/>
<dbReference type="PDBsum" id="7OFF"/>
<dbReference type="PDBsum" id="7P58"/>
<dbReference type="PDBsum" id="7P5E"/>
<dbReference type="PDBsum" id="7P5F"/>
<dbReference type="PDBsum" id="7P5I"/>
<dbReference type="PDBsum" id="7P5K"/>
<dbReference type="PDBsum" id="7P5N"/>
<dbReference type="PDBsum" id="7P5P"/>
<dbReference type="PDBsum" id="7YEN"/>
<dbReference type="PDBsum" id="8A46"/>
<dbReference type="PDBsum" id="8IN0"/>
<dbReference type="PDBsum" id="8Q1Q"/>
<dbReference type="PDBsum" id="8Q1R"/>
<dbReference type="PDBsum" id="9F2P"/>
<dbReference type="PDBsum" id="9F2Q"/>
<dbReference type="BMRB" id="Q9Z2X8"/>
<dbReference type="SMR" id="Q9Z2X8"/>
<dbReference type="BioGRID" id="206135">
    <property type="interactions" value="29"/>
</dbReference>
<dbReference type="CORUM" id="Q9Z2X8"/>
<dbReference type="DIP" id="DIP-49698N"/>
<dbReference type="ELM" id="Q9Z2X8"/>
<dbReference type="FunCoup" id="Q9Z2X8">
    <property type="interactions" value="897"/>
</dbReference>
<dbReference type="IntAct" id="Q9Z2X8">
    <property type="interactions" value="9"/>
</dbReference>
<dbReference type="MINT" id="Q9Z2X8"/>
<dbReference type="STRING" id="10090.ENSMUSP00000131029"/>
<dbReference type="BindingDB" id="Q9Z2X8"/>
<dbReference type="ChEMBL" id="CHEMBL3562164"/>
<dbReference type="GlyGen" id="Q9Z2X8">
    <property type="glycosylation" value="8 sites, 1 O-linked glycan (1 site)"/>
</dbReference>
<dbReference type="iPTMnet" id="Q9Z2X8"/>
<dbReference type="PhosphoSitePlus" id="Q9Z2X8"/>
<dbReference type="SwissPalm" id="Q9Z2X8"/>
<dbReference type="PaxDb" id="10090-ENSMUSP00000131029"/>
<dbReference type="PeptideAtlas" id="Q9Z2X8"/>
<dbReference type="ProteomicsDB" id="263429"/>
<dbReference type="Pumba" id="Q9Z2X8"/>
<dbReference type="Antibodypedia" id="1418">
    <property type="antibodies" value="708 antibodies from 39 providers"/>
</dbReference>
<dbReference type="DNASU" id="50868"/>
<dbReference type="Ensembl" id="ENSMUST00000049567.10">
    <property type="protein sequence ID" value="ENSMUSP00000062467.5"/>
    <property type="gene ID" value="ENSMUSG00000003308.16"/>
</dbReference>
<dbReference type="Ensembl" id="ENSMUST00000164812.8">
    <property type="protein sequence ID" value="ENSMUSP00000131029.2"/>
    <property type="gene ID" value="ENSMUSG00000003308.16"/>
</dbReference>
<dbReference type="Ensembl" id="ENSMUST00000193982.2">
    <property type="protein sequence ID" value="ENSMUSP00000141840.2"/>
    <property type="gene ID" value="ENSMUSG00000003308.16"/>
</dbReference>
<dbReference type="Ensembl" id="ENSMUST00000194542.6">
    <property type="protein sequence ID" value="ENSMUSP00000141807.2"/>
    <property type="gene ID" value="ENSMUSG00000003308.16"/>
</dbReference>
<dbReference type="GeneID" id="50868"/>
<dbReference type="KEGG" id="mmu:50868"/>
<dbReference type="UCSC" id="uc009oko.2">
    <property type="organism name" value="mouse"/>
</dbReference>
<dbReference type="AGR" id="MGI:1858732"/>
<dbReference type="CTD" id="9817"/>
<dbReference type="MGI" id="MGI:1858732">
    <property type="gene designation" value="Keap1"/>
</dbReference>
<dbReference type="VEuPathDB" id="HostDB:ENSMUSG00000003308"/>
<dbReference type="eggNOG" id="KOG4441">
    <property type="taxonomic scope" value="Eukaryota"/>
</dbReference>
<dbReference type="GeneTree" id="ENSGT00940000159543"/>
<dbReference type="HOGENOM" id="CLU_004253_14_2_1"/>
<dbReference type="InParanoid" id="Q9Z2X8"/>
<dbReference type="OMA" id="TECLTEY"/>
<dbReference type="OrthoDB" id="45365at2759"/>
<dbReference type="PhylomeDB" id="Q9Z2X8"/>
<dbReference type="TreeFam" id="TF329218"/>
<dbReference type="Reactome" id="R-MMU-5689880">
    <property type="pathway name" value="Ub-specific processing proteases"/>
</dbReference>
<dbReference type="Reactome" id="R-MMU-8951664">
    <property type="pathway name" value="Neddylation"/>
</dbReference>
<dbReference type="Reactome" id="R-MMU-9755511">
    <property type="pathway name" value="KEAP1-NFE2L2 pathway"/>
</dbReference>
<dbReference type="Reactome" id="R-MMU-983168">
    <property type="pathway name" value="Antigen processing: Ubiquitination &amp; Proteasome degradation"/>
</dbReference>
<dbReference type="UniPathway" id="UPA00143"/>
<dbReference type="BioGRID-ORCS" id="50868">
    <property type="hits" value="24 hits in 83 CRISPR screens"/>
</dbReference>
<dbReference type="ChiTaRS" id="Keap1">
    <property type="organism name" value="mouse"/>
</dbReference>
<dbReference type="EvolutionaryTrace" id="Q9Z2X8"/>
<dbReference type="PRO" id="PR:Q9Z2X8"/>
<dbReference type="Proteomes" id="UP000000589">
    <property type="component" value="Chromosome 9"/>
</dbReference>
<dbReference type="RNAct" id="Q9Z2X8">
    <property type="molecule type" value="protein"/>
</dbReference>
<dbReference type="Bgee" id="ENSMUSG00000003308">
    <property type="expression patterns" value="Expressed in supraoptic nucleus and 243 other cell types or tissues"/>
</dbReference>
<dbReference type="ExpressionAtlas" id="Q9Z2X8">
    <property type="expression patterns" value="baseline and differential"/>
</dbReference>
<dbReference type="GO" id="GO:0005884">
    <property type="term" value="C:actin filament"/>
    <property type="evidence" value="ECO:0000314"/>
    <property type="project" value="CACAO"/>
</dbReference>
<dbReference type="GO" id="GO:0034451">
    <property type="term" value="C:centriolar satellite"/>
    <property type="evidence" value="ECO:0007669"/>
    <property type="project" value="Ensembl"/>
</dbReference>
<dbReference type="GO" id="GO:0031463">
    <property type="term" value="C:Cul3-RING ubiquitin ligase complex"/>
    <property type="evidence" value="ECO:0000314"/>
    <property type="project" value="UniProtKB"/>
</dbReference>
<dbReference type="GO" id="GO:0005737">
    <property type="term" value="C:cytoplasm"/>
    <property type="evidence" value="ECO:0000314"/>
    <property type="project" value="UniProtKB"/>
</dbReference>
<dbReference type="GO" id="GO:0005829">
    <property type="term" value="C:cytosol"/>
    <property type="evidence" value="ECO:0007669"/>
    <property type="project" value="Ensembl"/>
</dbReference>
<dbReference type="GO" id="GO:0005783">
    <property type="term" value="C:endoplasmic reticulum"/>
    <property type="evidence" value="ECO:0000314"/>
    <property type="project" value="MGI"/>
</dbReference>
<dbReference type="GO" id="GO:0016234">
    <property type="term" value="C:inclusion body"/>
    <property type="evidence" value="ECO:0000314"/>
    <property type="project" value="UniProtKB"/>
</dbReference>
<dbReference type="GO" id="GO:0030496">
    <property type="term" value="C:midbody"/>
    <property type="evidence" value="ECO:0007669"/>
    <property type="project" value="Ensembl"/>
</dbReference>
<dbReference type="GO" id="GO:0005654">
    <property type="term" value="C:nucleoplasm"/>
    <property type="evidence" value="ECO:0007669"/>
    <property type="project" value="Ensembl"/>
</dbReference>
<dbReference type="GO" id="GO:0032991">
    <property type="term" value="C:protein-containing complex"/>
    <property type="evidence" value="ECO:0000315"/>
    <property type="project" value="CAFA"/>
</dbReference>
<dbReference type="GO" id="GO:0097718">
    <property type="term" value="F:disordered domain specific binding"/>
    <property type="evidence" value="ECO:0000353"/>
    <property type="project" value="CAFA"/>
</dbReference>
<dbReference type="GO" id="GO:0042802">
    <property type="term" value="F:identical protein binding"/>
    <property type="evidence" value="ECO:0000315"/>
    <property type="project" value="CAFA"/>
</dbReference>
<dbReference type="GO" id="GO:0061629">
    <property type="term" value="F:RNA polymerase II-specific DNA-binding transcription factor binding"/>
    <property type="evidence" value="ECO:0007669"/>
    <property type="project" value="Ensembl"/>
</dbReference>
<dbReference type="GO" id="GO:0140416">
    <property type="term" value="F:transcription regulator inhibitor activity"/>
    <property type="evidence" value="ECO:0007669"/>
    <property type="project" value="Ensembl"/>
</dbReference>
<dbReference type="GO" id="GO:1990756">
    <property type="term" value="F:ubiquitin-like ligase-substrate adaptor activity"/>
    <property type="evidence" value="ECO:0007669"/>
    <property type="project" value="Ensembl"/>
</dbReference>
<dbReference type="GO" id="GO:0071353">
    <property type="term" value="P:cellular response to interleukin-4"/>
    <property type="evidence" value="ECO:0000314"/>
    <property type="project" value="MGI"/>
</dbReference>
<dbReference type="GO" id="GO:0034599">
    <property type="term" value="P:cellular response to oxidative stress"/>
    <property type="evidence" value="ECO:0000314"/>
    <property type="project" value="UniProtKB"/>
</dbReference>
<dbReference type="GO" id="GO:0001701">
    <property type="term" value="P:in utero embryonic development"/>
    <property type="evidence" value="ECO:0000315"/>
    <property type="project" value="MGI"/>
</dbReference>
<dbReference type="GO" id="GO:1902883">
    <property type="term" value="P:negative regulation of response to oxidative stress"/>
    <property type="evidence" value="ECO:0007669"/>
    <property type="project" value="Ensembl"/>
</dbReference>
<dbReference type="GO" id="GO:0000122">
    <property type="term" value="P:negative regulation of transcription by RNA polymerase II"/>
    <property type="evidence" value="ECO:0007669"/>
    <property type="project" value="Ensembl"/>
</dbReference>
<dbReference type="GO" id="GO:0043161">
    <property type="term" value="P:proteasome-mediated ubiquitin-dependent protein catabolic process"/>
    <property type="evidence" value="ECO:0007669"/>
    <property type="project" value="Ensembl"/>
</dbReference>
<dbReference type="GO" id="GO:0016567">
    <property type="term" value="P:protein ubiquitination"/>
    <property type="evidence" value="ECO:0000314"/>
    <property type="project" value="UniProtKB"/>
</dbReference>
<dbReference type="GO" id="GO:0010506">
    <property type="term" value="P:regulation of autophagy"/>
    <property type="evidence" value="ECO:0000314"/>
    <property type="project" value="UniProtKB"/>
</dbReference>
<dbReference type="GO" id="GO:0006355">
    <property type="term" value="P:regulation of DNA-templated transcription"/>
    <property type="evidence" value="ECO:0000315"/>
    <property type="project" value="MGI"/>
</dbReference>
<dbReference type="GO" id="GO:0045604">
    <property type="term" value="P:regulation of epidermal cell differentiation"/>
    <property type="evidence" value="ECO:0000315"/>
    <property type="project" value="MGI"/>
</dbReference>
<dbReference type="GO" id="GO:0006511">
    <property type="term" value="P:ubiquitin-dependent protein catabolic process"/>
    <property type="evidence" value="ECO:0000314"/>
    <property type="project" value="UniProtKB"/>
</dbReference>
<dbReference type="CDD" id="cd18458">
    <property type="entry name" value="BACK_KLHL19_KEAP1"/>
    <property type="match status" value="1"/>
</dbReference>
<dbReference type="CDD" id="cd18248">
    <property type="entry name" value="BTB_POZ_KLHL19_KEAP1"/>
    <property type="match status" value="1"/>
</dbReference>
<dbReference type="FunFam" id="2.120.10.80:FF:000024">
    <property type="entry name" value="Kelch-like ECH-associated protein 1"/>
    <property type="match status" value="1"/>
</dbReference>
<dbReference type="FunFam" id="1.25.40.420:FF:000001">
    <property type="entry name" value="Kelch-like family member 12"/>
    <property type="match status" value="1"/>
</dbReference>
<dbReference type="FunFam" id="3.30.710.10:FF:000001">
    <property type="entry name" value="Kelch-like family member 20"/>
    <property type="match status" value="1"/>
</dbReference>
<dbReference type="Gene3D" id="1.25.40.420">
    <property type="match status" value="1"/>
</dbReference>
<dbReference type="Gene3D" id="2.120.10.80">
    <property type="entry name" value="Kelch-type beta propeller"/>
    <property type="match status" value="1"/>
</dbReference>
<dbReference type="Gene3D" id="3.30.710.10">
    <property type="entry name" value="Potassium Channel Kv1.1, Chain A"/>
    <property type="match status" value="1"/>
</dbReference>
<dbReference type="IDEAL" id="IID50109"/>
<dbReference type="InterPro" id="IPR011705">
    <property type="entry name" value="BACK"/>
</dbReference>
<dbReference type="InterPro" id="IPR017096">
    <property type="entry name" value="BTB-kelch_protein"/>
</dbReference>
<dbReference type="InterPro" id="IPR000210">
    <property type="entry name" value="BTB/POZ_dom"/>
</dbReference>
<dbReference type="InterPro" id="IPR047098">
    <property type="entry name" value="KEAP1_BACK"/>
</dbReference>
<dbReference type="InterPro" id="IPR030563">
    <property type="entry name" value="KEAP1_BTB_POZ_dom"/>
</dbReference>
<dbReference type="InterPro" id="IPR015915">
    <property type="entry name" value="Kelch-typ_b-propeller"/>
</dbReference>
<dbReference type="InterPro" id="IPR006652">
    <property type="entry name" value="Kelch_1"/>
</dbReference>
<dbReference type="InterPro" id="IPR011333">
    <property type="entry name" value="SKP1/BTB/POZ_sf"/>
</dbReference>
<dbReference type="PANTHER" id="PTHR24412">
    <property type="entry name" value="KELCH PROTEIN"/>
    <property type="match status" value="1"/>
</dbReference>
<dbReference type="PANTHER" id="PTHR24412:SF162">
    <property type="entry name" value="KELCH-LIKE ECH-ASSOCIATED PROTEIN 1"/>
    <property type="match status" value="1"/>
</dbReference>
<dbReference type="Pfam" id="PF07707">
    <property type="entry name" value="BACK"/>
    <property type="match status" value="1"/>
</dbReference>
<dbReference type="Pfam" id="PF00651">
    <property type="entry name" value="BTB"/>
    <property type="match status" value="1"/>
</dbReference>
<dbReference type="Pfam" id="PF01344">
    <property type="entry name" value="Kelch_1"/>
    <property type="match status" value="6"/>
</dbReference>
<dbReference type="PIRSF" id="PIRSF037037">
    <property type="entry name" value="Kelch-like_protein_gigaxonin"/>
    <property type="match status" value="1"/>
</dbReference>
<dbReference type="SMART" id="SM00875">
    <property type="entry name" value="BACK"/>
    <property type="match status" value="1"/>
</dbReference>
<dbReference type="SMART" id="SM00225">
    <property type="entry name" value="BTB"/>
    <property type="match status" value="1"/>
</dbReference>
<dbReference type="SMART" id="SM00612">
    <property type="entry name" value="Kelch"/>
    <property type="match status" value="6"/>
</dbReference>
<dbReference type="SUPFAM" id="SSF117281">
    <property type="entry name" value="Kelch motif"/>
    <property type="match status" value="1"/>
</dbReference>
<dbReference type="SUPFAM" id="SSF54695">
    <property type="entry name" value="POZ domain"/>
    <property type="match status" value="1"/>
</dbReference>
<dbReference type="PROSITE" id="PS50097">
    <property type="entry name" value="BTB"/>
    <property type="match status" value="1"/>
</dbReference>
<reference key="1">
    <citation type="journal article" date="1999" name="Genes Dev.">
        <title>Keap1 represses nuclear activation of antioxidant responsive elements by Nrf2 through binding to the amino-terminal Neh2 domain.</title>
        <authorList>
            <person name="Itoh K."/>
            <person name="Wakabayashi N."/>
            <person name="Katoh Y."/>
            <person name="Ishii T."/>
            <person name="Igarashi K."/>
            <person name="Engel J.D."/>
            <person name="Yamamoto M."/>
        </authorList>
    </citation>
    <scope>NUCLEOTIDE SEQUENCE [MRNA]</scope>
    <scope>FUNCTION</scope>
    <source>
        <tissue>Embryo</tissue>
    </source>
</reference>
<reference key="2">
    <citation type="submission" date="2001-11" db="EMBL/GenBank/DDBJ databases">
        <title>Mouse INrf2 gene structure.</title>
        <authorList>
            <person name="Dhakshinamoorthy S."/>
            <person name="Jaiswal A.K."/>
        </authorList>
    </citation>
    <scope>NUCLEOTIDE SEQUENCE [GENOMIC DNA]</scope>
    <source>
        <strain>C57BL/6J</strain>
    </source>
</reference>
<reference key="3">
    <citation type="journal article" date="2003" name="DNA Res.">
        <title>Prediction of the coding sequences of mouse homologues of KIAA gene: III. The complete nucleotide sequences of 500 mouse KIAA-homologous cDNAs identified by screening of terminal sequences of cDNA clones randomly sampled from size-fractionated libraries.</title>
        <authorList>
            <person name="Okazaki N."/>
            <person name="Kikuno R."/>
            <person name="Ohara R."/>
            <person name="Inamoto S."/>
            <person name="Koseki H."/>
            <person name="Hiraoka S."/>
            <person name="Saga Y."/>
            <person name="Nagase T."/>
            <person name="Ohara O."/>
            <person name="Koga H."/>
        </authorList>
    </citation>
    <scope>NUCLEOTIDE SEQUENCE [LARGE SCALE MRNA]</scope>
    <source>
        <tissue>Fetal brain</tissue>
    </source>
</reference>
<reference key="4">
    <citation type="journal article" date="2005" name="Science">
        <title>The transcriptional landscape of the mammalian genome.</title>
        <authorList>
            <person name="Carninci P."/>
            <person name="Kasukawa T."/>
            <person name="Katayama S."/>
            <person name="Gough J."/>
            <person name="Frith M.C."/>
            <person name="Maeda N."/>
            <person name="Oyama R."/>
            <person name="Ravasi T."/>
            <person name="Lenhard B."/>
            <person name="Wells C."/>
            <person name="Kodzius R."/>
            <person name="Shimokawa K."/>
            <person name="Bajic V.B."/>
            <person name="Brenner S.E."/>
            <person name="Batalov S."/>
            <person name="Forrest A.R."/>
            <person name="Zavolan M."/>
            <person name="Davis M.J."/>
            <person name="Wilming L.G."/>
            <person name="Aidinis V."/>
            <person name="Allen J.E."/>
            <person name="Ambesi-Impiombato A."/>
            <person name="Apweiler R."/>
            <person name="Aturaliya R.N."/>
            <person name="Bailey T.L."/>
            <person name="Bansal M."/>
            <person name="Baxter L."/>
            <person name="Beisel K.W."/>
            <person name="Bersano T."/>
            <person name="Bono H."/>
            <person name="Chalk A.M."/>
            <person name="Chiu K.P."/>
            <person name="Choudhary V."/>
            <person name="Christoffels A."/>
            <person name="Clutterbuck D.R."/>
            <person name="Crowe M.L."/>
            <person name="Dalla E."/>
            <person name="Dalrymple B.P."/>
            <person name="de Bono B."/>
            <person name="Della Gatta G."/>
            <person name="di Bernardo D."/>
            <person name="Down T."/>
            <person name="Engstrom P."/>
            <person name="Fagiolini M."/>
            <person name="Faulkner G."/>
            <person name="Fletcher C.F."/>
            <person name="Fukushima T."/>
            <person name="Furuno M."/>
            <person name="Futaki S."/>
            <person name="Gariboldi M."/>
            <person name="Georgii-Hemming P."/>
            <person name="Gingeras T.R."/>
            <person name="Gojobori T."/>
            <person name="Green R.E."/>
            <person name="Gustincich S."/>
            <person name="Harbers M."/>
            <person name="Hayashi Y."/>
            <person name="Hensch T.K."/>
            <person name="Hirokawa N."/>
            <person name="Hill D."/>
            <person name="Huminiecki L."/>
            <person name="Iacono M."/>
            <person name="Ikeo K."/>
            <person name="Iwama A."/>
            <person name="Ishikawa T."/>
            <person name="Jakt M."/>
            <person name="Kanapin A."/>
            <person name="Katoh M."/>
            <person name="Kawasawa Y."/>
            <person name="Kelso J."/>
            <person name="Kitamura H."/>
            <person name="Kitano H."/>
            <person name="Kollias G."/>
            <person name="Krishnan S.P."/>
            <person name="Kruger A."/>
            <person name="Kummerfeld S.K."/>
            <person name="Kurochkin I.V."/>
            <person name="Lareau L.F."/>
            <person name="Lazarevic D."/>
            <person name="Lipovich L."/>
            <person name="Liu J."/>
            <person name="Liuni S."/>
            <person name="McWilliam S."/>
            <person name="Madan Babu M."/>
            <person name="Madera M."/>
            <person name="Marchionni L."/>
            <person name="Matsuda H."/>
            <person name="Matsuzawa S."/>
            <person name="Miki H."/>
            <person name="Mignone F."/>
            <person name="Miyake S."/>
            <person name="Morris K."/>
            <person name="Mottagui-Tabar S."/>
            <person name="Mulder N."/>
            <person name="Nakano N."/>
            <person name="Nakauchi H."/>
            <person name="Ng P."/>
            <person name="Nilsson R."/>
            <person name="Nishiguchi S."/>
            <person name="Nishikawa S."/>
            <person name="Nori F."/>
            <person name="Ohara O."/>
            <person name="Okazaki Y."/>
            <person name="Orlando V."/>
            <person name="Pang K.C."/>
            <person name="Pavan W.J."/>
            <person name="Pavesi G."/>
            <person name="Pesole G."/>
            <person name="Petrovsky N."/>
            <person name="Piazza S."/>
            <person name="Reed J."/>
            <person name="Reid J.F."/>
            <person name="Ring B.Z."/>
            <person name="Ringwald M."/>
            <person name="Rost B."/>
            <person name="Ruan Y."/>
            <person name="Salzberg S.L."/>
            <person name="Sandelin A."/>
            <person name="Schneider C."/>
            <person name="Schoenbach C."/>
            <person name="Sekiguchi K."/>
            <person name="Semple C.A."/>
            <person name="Seno S."/>
            <person name="Sessa L."/>
            <person name="Sheng Y."/>
            <person name="Shibata Y."/>
            <person name="Shimada H."/>
            <person name="Shimada K."/>
            <person name="Silva D."/>
            <person name="Sinclair B."/>
            <person name="Sperling S."/>
            <person name="Stupka E."/>
            <person name="Sugiura K."/>
            <person name="Sultana R."/>
            <person name="Takenaka Y."/>
            <person name="Taki K."/>
            <person name="Tammoja K."/>
            <person name="Tan S.L."/>
            <person name="Tang S."/>
            <person name="Taylor M.S."/>
            <person name="Tegner J."/>
            <person name="Teichmann S.A."/>
            <person name="Ueda H.R."/>
            <person name="van Nimwegen E."/>
            <person name="Verardo R."/>
            <person name="Wei C.L."/>
            <person name="Yagi K."/>
            <person name="Yamanishi H."/>
            <person name="Zabarovsky E."/>
            <person name="Zhu S."/>
            <person name="Zimmer A."/>
            <person name="Hide W."/>
            <person name="Bult C."/>
            <person name="Grimmond S.M."/>
            <person name="Teasdale R.D."/>
            <person name="Liu E.T."/>
            <person name="Brusic V."/>
            <person name="Quackenbush J."/>
            <person name="Wahlestedt C."/>
            <person name="Mattick J.S."/>
            <person name="Hume D.A."/>
            <person name="Kai C."/>
            <person name="Sasaki D."/>
            <person name="Tomaru Y."/>
            <person name="Fukuda S."/>
            <person name="Kanamori-Katayama M."/>
            <person name="Suzuki M."/>
            <person name="Aoki J."/>
            <person name="Arakawa T."/>
            <person name="Iida J."/>
            <person name="Imamura K."/>
            <person name="Itoh M."/>
            <person name="Kato T."/>
            <person name="Kawaji H."/>
            <person name="Kawagashira N."/>
            <person name="Kawashima T."/>
            <person name="Kojima M."/>
            <person name="Kondo S."/>
            <person name="Konno H."/>
            <person name="Nakano K."/>
            <person name="Ninomiya N."/>
            <person name="Nishio T."/>
            <person name="Okada M."/>
            <person name="Plessy C."/>
            <person name="Shibata K."/>
            <person name="Shiraki T."/>
            <person name="Suzuki S."/>
            <person name="Tagami M."/>
            <person name="Waki K."/>
            <person name="Watahiki A."/>
            <person name="Okamura-Oho Y."/>
            <person name="Suzuki H."/>
            <person name="Kawai J."/>
            <person name="Hayashizaki Y."/>
        </authorList>
    </citation>
    <scope>NUCLEOTIDE SEQUENCE [LARGE SCALE MRNA]</scope>
    <source>
        <strain>C57BL/6J</strain>
        <strain>NOD</strain>
        <tissue>Bone marrow</tissue>
        <tissue>Corpora quadrigemina</tissue>
        <tissue>Dendritic cell</tissue>
        <tissue>Liver</tissue>
        <tissue>Lung</tissue>
    </source>
</reference>
<reference key="5">
    <citation type="journal article" date="2004" name="Genome Res.">
        <title>The status, quality, and expansion of the NIH full-length cDNA project: the Mammalian Gene Collection (MGC).</title>
        <authorList>
            <consortium name="The MGC Project Team"/>
        </authorList>
    </citation>
    <scope>NUCLEOTIDE SEQUENCE [LARGE SCALE MRNA]</scope>
    <source>
        <strain>C57BL/6J</strain>
        <tissue>Brain</tissue>
    </source>
</reference>
<reference key="6">
    <citation type="journal article" date="2002" name="Proc. Natl. Acad. Sci. U.S.A.">
        <title>Direct evidence that sulfhydryl groups of Keap1 are the sensors regulating induction of phase 2 enzymes that protect against carcinogens and oxidants.</title>
        <authorList>
            <person name="Dinkova-Kostova A.T."/>
            <person name="Holtzclaw W.D."/>
            <person name="Cole R.N."/>
            <person name="Itoh K."/>
            <person name="Wakabayashi N."/>
            <person name="Katoh Y."/>
            <person name="Yamamoto M."/>
            <person name="Talalay P."/>
        </authorList>
    </citation>
    <scope>FUNCTION</scope>
    <scope>ACTIVITY REGULATION</scope>
    <scope>DOMAIN</scope>
</reference>
<reference key="7">
    <citation type="journal article" date="2003" name="J. Biol. Chem.">
        <title>Keap1-dependent proteasomal degradation of transcription factor Nrf2 contributes to the negative regulation of antioxidant response element-driven gene expression.</title>
        <authorList>
            <person name="McMahon M."/>
            <person name="Itoh K."/>
            <person name="Yamamoto M."/>
            <person name="Hayes J.D."/>
        </authorList>
    </citation>
    <scope>FUNCTION</scope>
</reference>
<reference key="8">
    <citation type="journal article" date="2003" name="Nat. Genet.">
        <title>Keap1-null mutation leads to postnatal lethality due to constitutive Nrf2 activation.</title>
        <authorList>
            <person name="Wakabayashi N."/>
            <person name="Itoh K."/>
            <person name="Wakabayashi J."/>
            <person name="Motohashi H."/>
            <person name="Noda S."/>
            <person name="Takahashi S."/>
            <person name="Imakado S."/>
            <person name="Kotsuji T."/>
            <person name="Otsuka F."/>
            <person name="Roop D.R."/>
            <person name="Harada T."/>
            <person name="Engel J.D."/>
            <person name="Yamamoto M."/>
        </authorList>
    </citation>
    <scope>DISRUPTION PHENOTYPE</scope>
</reference>
<reference key="9">
    <citation type="journal article" date="2004" name="Biochemistry">
        <title>Fetal Alz-50 clone 1 interacts with the human orthologue of the Kelch-like Ech-associated protein.</title>
        <authorList>
            <person name="Strachan G.D."/>
            <person name="Morgan K.L."/>
            <person name="Otis L.L."/>
            <person name="Caltagarone J."/>
            <person name="Gittis A."/>
            <person name="Bowser R."/>
            <person name="Jordan-Sciutto K.L."/>
        </authorList>
    </citation>
    <scope>SUBCELLULAR LOCATION</scope>
</reference>
<reference key="10">
    <citation type="journal article" date="2004" name="Mol. Cell. Biol.">
        <title>Oxidative stress sensor Keap1 functions as an adaptor for Cul3-based E3 ligase to regulate proteasomal degradation of Nrf2.</title>
        <authorList>
            <person name="Kobayashi A."/>
            <person name="Kang M.I."/>
            <person name="Okawa H."/>
            <person name="Ohtsuji M."/>
            <person name="Zenke Y."/>
            <person name="Chiba T."/>
            <person name="Igarashi K."/>
            <person name="Yamamoto M."/>
        </authorList>
    </citation>
    <scope>FUNCTION</scope>
    <scope>IDENTIFICATION IN THE BCR(KEAP1) COMPLEX</scope>
    <scope>INTERACTION WITH NFE2L2</scope>
</reference>
<reference key="11">
    <citation type="journal article" date="2004" name="Mol. Cell. Biol.">
        <title>The Keap1-BTB protein is an adaptor that bridges Nrf2 to a Cul3-based E3 ligase: oxidative stress sensing by a Cul3-Keap1 ligase.</title>
        <authorList>
            <person name="Cullinan S.B."/>
            <person name="Gordan J.D."/>
            <person name="Jin J."/>
            <person name="Harper J.W."/>
            <person name="Diehl J.A."/>
        </authorList>
    </citation>
    <scope>FUNCTION</scope>
    <scope>SUBCELLULAR LOCATION</scope>
    <scope>INTERACTION WITH NFE2L2</scope>
</reference>
<reference key="12">
    <citation type="journal article" date="2004" name="Proc. Natl. Acad. Sci. U.S.A.">
        <title>Protection against electrophile and oxidant stress by induction of the phase 2 response: fate of cysteines of the Keap1 sensor modified by inducers.</title>
        <authorList>
            <person name="Wakabayashi N."/>
            <person name="Dinkova-Kostova A.T."/>
            <person name="Holtzclaw W.D."/>
            <person name="Kang M.I."/>
            <person name="Kobayashi A."/>
            <person name="Yamamoto M."/>
            <person name="Kensler T.W."/>
            <person name="Talalay P."/>
        </authorList>
    </citation>
    <scope>FUNCTION</scope>
    <scope>ACTIVITY REGULATION</scope>
    <scope>DOMAIN</scope>
    <scope>MUTAGENESIS OF CYS-273 AND CYS-288</scope>
</reference>
<reference key="13">
    <citation type="journal article" date="2005" name="Arch. Biochem. Biophys.">
        <title>Evolutionary conserved N-terminal domain of Nrf2 is essential for the Keap1-mediated degradation of the protein by proteasome.</title>
        <authorList>
            <person name="Katoh Y."/>
            <person name="Iida K."/>
            <person name="Kang M.I."/>
            <person name="Kobayashi A."/>
            <person name="Mizukami M."/>
            <person name="Tong K.I."/>
            <person name="McMahon M."/>
            <person name="Hayes J.D."/>
            <person name="Itoh K."/>
            <person name="Yamamoto M."/>
        </authorList>
    </citation>
    <scope>FUNCTION</scope>
    <scope>INTERACTION WITH NFE2L2</scope>
</reference>
<reference key="14">
    <citation type="journal article" date="2006" name="J. Biol. Chem.">
        <title>Dimerization of substrate adaptors can facilitate cullin-mediated ubiquitylation of proteins by a 'tethering' mechanism: a two-site interaction model for the Nrf2-Keap1 complex.</title>
        <authorList>
            <person name="McMahon M."/>
            <person name="Thomas N."/>
            <person name="Itoh K."/>
            <person name="Yamamoto M."/>
            <person name="Hayes J.D."/>
        </authorList>
    </citation>
    <scope>IDENTIFICATION IN THE BCR(KEAP1) COMPLEX</scope>
    <scope>INTERACTION WITH NFE2L2</scope>
    <scope>MUTAGENESIS OF ARG-71; ARG-380; ARG-415 AND ARG-483</scope>
</reference>
<reference key="15">
    <citation type="journal article" date="2006" name="Mol. Cell. Biol.">
        <title>Keap1 recruits Neh2 through binding to ETGE and DLG motifs: characterization of the two-site molecular recognition model.</title>
        <authorList>
            <person name="Tong K.I."/>
            <person name="Katoh Y."/>
            <person name="Kusunoki H."/>
            <person name="Itoh K."/>
            <person name="Tanaka T."/>
            <person name="Yamamoto M."/>
        </authorList>
    </citation>
    <scope>INTERACTION WITH NFE2L2</scope>
</reference>
<reference key="16">
    <citation type="journal article" date="2007" name="Genes Cells">
        <title>Subcellular localization and cytoplasmic complex status of endogenous Keap1.</title>
        <authorList>
            <person name="Watai Y."/>
            <person name="Kobayashi A."/>
            <person name="Nagase H."/>
            <person name="Mizukami M."/>
            <person name="McEvoy J."/>
            <person name="Singer J.D."/>
            <person name="Itoh K."/>
            <person name="Yamamoto M."/>
        </authorList>
    </citation>
    <scope>SUBCELLULAR LOCATION</scope>
</reference>
<reference key="17">
    <citation type="journal article" date="2007" name="Nat. Chem. Biol.">
        <title>Protein S-guanylation by the biological signal 8-nitroguanosine 3',5'-cyclic monophosphate.</title>
        <authorList>
            <person name="Sawa T."/>
            <person name="Zaki M.H."/>
            <person name="Okamoto T."/>
            <person name="Akuta T."/>
            <person name="Tokutomi Y."/>
            <person name="Kim-Mitsuyama S."/>
            <person name="Ihara H."/>
            <person name="Kobayashi A."/>
            <person name="Yamamoto M."/>
            <person name="Fujii S."/>
            <person name="Arimoto H."/>
            <person name="Akaike T."/>
        </authorList>
    </citation>
    <scope>GUANYLATION</scope>
</reference>
<reference key="18">
    <citation type="journal article" date="2008" name="Mol. Cell. Biol.">
        <title>Physiological significance of reactive cysteine residues of Keap1 in determining Nrf2 activity.</title>
        <authorList>
            <person name="Yamamoto T."/>
            <person name="Suzuki T."/>
            <person name="Kobayashi A."/>
            <person name="Wakabayashi J."/>
            <person name="Maher J."/>
            <person name="Motohashi H."/>
            <person name="Yamamoto M."/>
        </authorList>
    </citation>
    <scope>MUTAGENESIS OF CYS-151; CYS-273 AND CYS-288</scope>
</reference>
<reference key="19">
    <citation type="journal article" date="2010" name="Autophagy">
        <title>Keap1 facilitates p62-mediated ubiquitin aggregate clearance via autophagy.</title>
        <authorList>
            <person name="Fan W."/>
            <person name="Tang Z."/>
            <person name="Chen D."/>
            <person name="Moughon D."/>
            <person name="Ding X."/>
            <person name="Chen S."/>
            <person name="Zhu M."/>
            <person name="Zhong Q."/>
        </authorList>
    </citation>
    <scope>INTERACTION WITH SQSTM1</scope>
    <scope>SUBCELLULAR LOCATION</scope>
</reference>
<reference key="20">
    <citation type="journal article" date="2010" name="Cell">
        <title>A tissue-specific atlas of mouse protein phosphorylation and expression.</title>
        <authorList>
            <person name="Huttlin E.L."/>
            <person name="Jedrychowski M.P."/>
            <person name="Elias J.E."/>
            <person name="Goswami T."/>
            <person name="Rad R."/>
            <person name="Beausoleil S.A."/>
            <person name="Villen J."/>
            <person name="Haas W."/>
            <person name="Sowa M.E."/>
            <person name="Gygi S.P."/>
        </authorList>
    </citation>
    <scope>IDENTIFICATION BY MASS SPECTROMETRY [LARGE SCALE ANALYSIS]</scope>
    <source>
        <tissue>Lung</tissue>
        <tissue>Spleen</tissue>
    </source>
</reference>
<reference key="21">
    <citation type="journal article" date="2010" name="J. Biol. Chem.">
        <title>The critical role of nitric oxide signaling, via protein S-guanylation and nitrated cyclic GMP, in the antioxidant adaptive response.</title>
        <authorList>
            <person name="Fujii S."/>
            <person name="Sawa T."/>
            <person name="Ihara H."/>
            <person name="Tong K.I."/>
            <person name="Ida T."/>
            <person name="Okamoto T."/>
            <person name="Ahtesham A.K."/>
            <person name="Ishima Y."/>
            <person name="Motohashi H."/>
            <person name="Yamamoto M."/>
            <person name="Akaike T."/>
        </authorList>
    </citation>
    <scope>GUANYLATION AT CYS-434</scope>
    <scope>ACTIVITY REGULATION</scope>
    <scope>FUNCTION</scope>
    <scope>DOMAIN</scope>
</reference>
<reference key="22">
    <citation type="journal article" date="2010" name="Mol. Cell. Biol.">
        <title>A noncanonical mechanism of Nrf2 activation by autophagy deficiency: direct interaction between Keap1 and p62.</title>
        <authorList>
            <person name="Lau A."/>
            <person name="Wang X.J."/>
            <person name="Zhao F."/>
            <person name="Villeneuve N.F."/>
            <person name="Wu T."/>
            <person name="Jiang T."/>
            <person name="Sun Z."/>
            <person name="White E."/>
            <person name="Zhang D.D."/>
        </authorList>
    </citation>
    <scope>FUNCTION</scope>
    <scope>INTERACTION WITH SQSTM1</scope>
    <scope>ACTIVITY REGULATION</scope>
    <scope>SUBCELLULAR LOCATION</scope>
    <scope>MUTAGENESIS OF ARG-380; ARG-415 AND ARG-483</scope>
</reference>
<reference key="23">
    <citation type="journal article" date="2010" name="Proc. Natl. Acad. Sci. U.S.A.">
        <title>Keap1 perceives stress via three sensors for the endogenous signaling molecules nitric oxide, zinc, and alkenals.</title>
        <authorList>
            <person name="McMahon M."/>
            <person name="Lamont D.J."/>
            <person name="Beattie K.A."/>
            <person name="Hayes J.D."/>
        </authorList>
    </citation>
    <scope>S-NITROSYLATION AT CYS-151</scope>
</reference>
<reference key="24">
    <citation type="journal article" date="2011" name="Cancer Cell">
        <title>Renal cyst formation in Fh1-deficient mice is independent of the Hif/Phd pathway: roles for fumarate in KEAP1 succination and Nrf2 signaling.</title>
        <authorList>
            <person name="Adam J."/>
            <person name="Hatipoglu E."/>
            <person name="O'Flaherty L."/>
            <person name="Ternette N."/>
            <person name="Sahgal N."/>
            <person name="Lockstone H."/>
            <person name="Baban D."/>
            <person name="Nye E."/>
            <person name="Stamp G.W."/>
            <person name="Wolhuter K."/>
            <person name="Stevens M."/>
            <person name="Fischer R."/>
            <person name="Carmeliet P."/>
            <person name="Maxwell P.H."/>
            <person name="Pugh C.W."/>
            <person name="Frizzell N."/>
            <person name="Soga T."/>
            <person name="Kessler B.M."/>
            <person name="El-Bahrawy M."/>
            <person name="Ratcliffe P.J."/>
            <person name="Pollard P.J."/>
        </authorList>
    </citation>
    <scope>SUCCINATION AT CYS-38; CYS-151; CYS-241; CYS-288; CYS-319 AND CYS-613</scope>
    <scope>DOMAIN</scope>
    <scope>ACTIVITY REGULATION</scope>
    <scope>FUNCTION</scope>
</reference>
<reference key="25">
    <citation type="journal article" date="2012" name="Proc. Natl. Acad. Sci. U.S.A.">
        <title>Keap1 degradation by autophagy for the maintenance of redox homeostasis.</title>
        <authorList>
            <person name="Taguchi K."/>
            <person name="Fujikawa N."/>
            <person name="Komatsu M."/>
            <person name="Ishii T."/>
            <person name="Unno M."/>
            <person name="Akaike T."/>
            <person name="Motohashi H."/>
            <person name="Yamamoto M."/>
        </authorList>
    </citation>
    <scope>DEGRADATION</scope>
</reference>
<reference key="26">
    <citation type="journal article" date="2016" name="Mol. Cell. Biol.">
        <title>Characterizations of Three Major Cysteine Sensors of Keap1 in Stress Response.</title>
        <authorList>
            <person name="Saito R."/>
            <person name="Suzuki T."/>
            <person name="Hiramoto K."/>
            <person name="Asami S."/>
            <person name="Naganuma E."/>
            <person name="Suda H."/>
            <person name="Iso T."/>
            <person name="Yamamoto H."/>
            <person name="Morita M."/>
            <person name="Baird L."/>
            <person name="Furusawa Y."/>
            <person name="Negishi T."/>
            <person name="Ichinose M."/>
            <person name="Yamamoto M."/>
        </authorList>
    </citation>
    <scope>MUTAGENESIS OF CYS-273 AND CYS-288</scope>
</reference>
<reference key="27">
    <citation type="journal article" date="2016" name="Mol. Cell. Biol.">
        <title>Absolute Amounts and Status of the Nrf2-Keap1-Cul3 Complex within Cells.</title>
        <authorList>
            <person name="Iso T."/>
            <person name="Suzuki T."/>
            <person name="Baird L."/>
            <person name="Yamamoto M."/>
        </authorList>
    </citation>
    <scope>SUBCELLULAR LOCATION</scope>
    <scope>IDENTIFICATION IN THE BCR(KEAP1) COMPLEX</scope>
    <scope>INTERACTION WITH NFE2L2</scope>
</reference>
<reference key="28">
    <citation type="journal article" date="2017" name="Cell Rep.">
        <title>Keap1/cullin3 modulates p62/SQSTM1 activity via UBA domain ubiquitination.</title>
        <authorList>
            <person name="Lee Y."/>
            <person name="Chou T.F."/>
            <person name="Pittman S.K."/>
            <person name="Keith A.L."/>
            <person name="Razani B."/>
            <person name="Weihl C.C."/>
        </authorList>
    </citation>
    <scope>FUNCTION</scope>
</reference>
<reference key="29">
    <citation type="journal article" date="2017" name="J. Biol. Chem.">
        <title>Stress-sensing mechanisms and the physiological roles of the Keap1-Nrf2 system during cellular stress.</title>
        <authorList>
            <person name="Suzuki T."/>
            <person name="Yamamoto M."/>
        </authorList>
    </citation>
    <scope>REVIEW</scope>
</reference>
<reference key="30">
    <citation type="journal article" date="2018" name="Nature">
        <title>Itaconate is an anti-inflammatory metabolite that activates Nrf2 via alkylation of KEAP1.</title>
        <authorList>
            <person name="Mills E.L."/>
            <person name="Ryan D.G."/>
            <person name="Prag H.A."/>
            <person name="Dikovskaya D."/>
            <person name="Menon D."/>
            <person name="Zaslona Z."/>
            <person name="Jedrychowski M.P."/>
            <person name="Costa A.S.H."/>
            <person name="Higgins M."/>
            <person name="Hams E."/>
            <person name="Szpyt J."/>
            <person name="Runtsch M.C."/>
            <person name="King M.S."/>
            <person name="McGouran J.F."/>
            <person name="Fischer R."/>
            <person name="Kessler B.M."/>
            <person name="McGettrick A.F."/>
            <person name="Hughes M.M."/>
            <person name="Carroll R.G."/>
            <person name="Booty L.M."/>
            <person name="Knatko E.V."/>
            <person name="Meakin P.J."/>
            <person name="Ashford M.L.J."/>
            <person name="Modis L.K."/>
            <person name="Brunori G."/>
            <person name="Sevin D.C."/>
            <person name="Fallon P.G."/>
            <person name="Caldwell S.T."/>
            <person name="Kunji E.R.S."/>
            <person name="Chouchani E.T."/>
            <person name="Frezza C."/>
            <person name="Dinkova-Kostova A.T."/>
            <person name="Hartley R.C."/>
            <person name="Murphy M.P."/>
            <person name="O'Neill L.A."/>
        </authorList>
    </citation>
    <scope>FUNCTION</scope>
    <scope>ALKYLATION</scope>
</reference>
<reference key="31">
    <citation type="journal article" date="2006" name="Mol. Cell">
        <title>Structural basis for defects of Keap1 activity provoked by its point mutations in lung cancer.</title>
        <authorList>
            <person name="Padmanabhan B."/>
            <person name="Tong K.I."/>
            <person name="Ohta T."/>
            <person name="Nakamura Y."/>
            <person name="Scharlock M."/>
            <person name="Ohtsuji M."/>
            <person name="Kang M."/>
            <person name="Kobayashi A."/>
            <person name="Yokoyama S."/>
            <person name="Yamamoto M."/>
        </authorList>
    </citation>
    <scope>X-RAY CRYSTALLOGRAPHY (1.60 ANGSTROMS) OF 309-624 IN COMPLEX WITH NFE2L2</scope>
    <scope>MUTAGENESIS OF 599-SER--ARG-601; 602-SER--VAL-604 AND 605-GLY--VAL-608</scope>
</reference>
<reference evidence="35" key="32">
    <citation type="journal article" date="2010" name="Nat. Cell Biol.">
        <title>The selective autophagy substrate p62 activates the stress responsive transcription factor Nrf2 through inactivation of Keap1.</title>
        <authorList>
            <person name="Komatsu M."/>
            <person name="Kurokawa H."/>
            <person name="Waguri S."/>
            <person name="Taguchi K."/>
            <person name="Kobayashi A."/>
            <person name="Ichimura Y."/>
            <person name="Sou Y.S."/>
            <person name="Ueno I."/>
            <person name="Sakamoto A."/>
            <person name="Tong K.I."/>
            <person name="Kim M."/>
            <person name="Nishito Y."/>
            <person name="Iemura S."/>
            <person name="Natsume T."/>
            <person name="Ueno T."/>
            <person name="Kominami E."/>
            <person name="Motohashi H."/>
            <person name="Tanaka K."/>
            <person name="Yamamoto M."/>
        </authorList>
    </citation>
    <scope>X-RAY CRYSTALLOGRAPHY (2.80 ANGSTROMS) OF 309-624 IN COMPLEX WITH SQSTM1</scope>
    <scope>FUNCTION</scope>
    <scope>INTERACTION WITH SQSTM1</scope>
    <scope>ACTIVITY REGULATION</scope>
    <scope>SUBCELLULAR LOCATION</scope>
    <scope>MUTAGENESIS OF TYR-334; SER-363; ARG-380; ASN-382; ARG-415; ARG-483; SER-508; GLN-530; SER-555 AND SER-602</scope>
</reference>
<reference evidence="36" key="33">
    <citation type="journal article" date="2013" name="Mol. Cell">
        <title>Phosphorylation of p62 activates the Keap1-Nrf2 pathway during selective autophagy.</title>
        <authorList>
            <person name="Ichimura Y."/>
            <person name="Waguri S."/>
            <person name="Sou Y.S."/>
            <person name="Kageyama S."/>
            <person name="Hasegawa J."/>
            <person name="Ishimura R."/>
            <person name="Saito T."/>
            <person name="Yang Y."/>
            <person name="Kouno T."/>
            <person name="Fukutomi T."/>
            <person name="Hoshii T."/>
            <person name="Hirao A."/>
            <person name="Takagi K."/>
            <person name="Mizushima T."/>
            <person name="Motohashi H."/>
            <person name="Lee M.S."/>
            <person name="Yoshimori T."/>
            <person name="Tanaka K."/>
            <person name="Yamamoto M."/>
            <person name="Komatsu M."/>
        </authorList>
    </citation>
    <scope>X-RAY CRYSTALLOGRAPHY (2.60 ANGSTROMS) OF 321-609 IN COMPLEX WITH SQSTM1</scope>
    <scope>FUNCTION</scope>
    <scope>INTERACTION WITH SQSTM1</scope>
    <scope>ACTIVITY REGULATION</scope>
    <scope>DEGRADATION</scope>
</reference>